<protein>
    <recommendedName>
        <fullName>Virion export protein</fullName>
    </recommendedName>
    <alternativeName>
        <fullName>Gene 4 protein</fullName>
        <shortName>G4P</shortName>
    </alternativeName>
</protein>
<accession>P03667</accession>
<organismHost>
    <name type="scientific">Escherichia coli</name>
    <dbReference type="NCBI Taxonomy" id="562"/>
</organismHost>
<sequence>MKLQAEKKLIFGYVALCFLMTLGIAFNVLADPVNLNNAPVRSFVQWYSQKSNKAVVVNPDVKGNITVFNADVNQANIDDFFKSVLNANGFVLMAGDPSGVSTPSKLPSQQTDNDDDYEDSADYVPVGDSVPVSAQPQKPLDLTVRNFKLTRVRSSDVLPLAKIFVDSNGGGDVIDYPGNNSLLVSGSAAIMNALADFITSIDVARDQVLIQSLMFETSLVNGVDLSFAAGSASGDKVAGGFNTSALGTALSTAGGSFGIFNGNVLALSIQAVKNDSNSKVISTPRILTQSGQTGYISVGQNVPFVTGKVTGEAANVNNPFQTIERRDVGVSLKVTPVVMGNGQLVLTIDTKADSLTSQMTASDIITNQRHMQTTVQIKDGQTLLLGGLIDSNTTDGNRSVPWFESVPVIGWLFRSHSDSHNERTMFVLLTAHVIKAL</sequence>
<proteinExistence type="inferred from homology"/>
<reference key="1">
    <citation type="journal article" date="1985" name="J. Mol. Biol.">
        <title>Nucleotide sequence and genetic organization of the genome of the N-specific filamentous bacteriophage IKe. Comparison with the genome of the F-specific filamentous phages M13, fd and f1.</title>
        <authorList>
            <person name="Peeters B.P.H."/>
            <person name="Peters R.M."/>
            <person name="Schoenmakers J.G.G."/>
            <person name="Konings R.N.H."/>
        </authorList>
    </citation>
    <scope>NUCLEOTIDE SEQUENCE [GENOMIC DNA]</scope>
</reference>
<comment type="function">
    <text evidence="1">Acts in the assembly and extrusion of the bacteriophage by forming a channel across the host outer membrane. This channel is just large enough to allow a newly synthesized phage particle to pass through. Extrusion is a process of concomitant assembly and secretion and takes place at specific assembly sites where host inner and outer membranes are in close contacts (By similarity).</text>
</comment>
<comment type="subunit">
    <text evidence="1">Homomultimer. The channel is composed of 14 G4P subunits that confer a barrel-like structure. Interacts with G1P; this interaction results in a complex that spans the inner an outer host membranes (By similarity).</text>
</comment>
<comment type="subcellular location">
    <subcellularLocation>
        <location evidence="4">Host membrane</location>
        <topology evidence="4">Single-pass type I membrane protein</topology>
    </subcellularLocation>
</comment>
<comment type="similarity">
    <text evidence="4">Belongs to the inovirus G4P protein family.</text>
</comment>
<name>G4P_BPIKE</name>
<evidence type="ECO:0000250" key="1"/>
<evidence type="ECO:0000255" key="2"/>
<evidence type="ECO:0000256" key="3">
    <source>
        <dbReference type="SAM" id="MobiDB-lite"/>
    </source>
</evidence>
<evidence type="ECO:0000305" key="4"/>
<dbReference type="EMBL" id="X02139">
    <property type="protein sequence ID" value="CAA26076.1"/>
    <property type="molecule type" value="Genomic_DNA"/>
</dbReference>
<dbReference type="PIR" id="A04269">
    <property type="entry name" value="Z4BPIK"/>
</dbReference>
<dbReference type="RefSeq" id="NP_040579.1">
    <property type="nucleotide sequence ID" value="NC_002014.1"/>
</dbReference>
<dbReference type="SMR" id="P03667"/>
<dbReference type="GeneID" id="1260883"/>
<dbReference type="KEGG" id="vg:1260883"/>
<dbReference type="OrthoDB" id="9067at10239"/>
<dbReference type="Proteomes" id="UP000000372">
    <property type="component" value="Genome"/>
</dbReference>
<dbReference type="GO" id="GO:0033644">
    <property type="term" value="C:host cell membrane"/>
    <property type="evidence" value="ECO:0007669"/>
    <property type="project" value="UniProtKB-SubCell"/>
</dbReference>
<dbReference type="GO" id="GO:0016020">
    <property type="term" value="C:membrane"/>
    <property type="evidence" value="ECO:0007669"/>
    <property type="project" value="UniProtKB-KW"/>
</dbReference>
<dbReference type="GO" id="GO:0009306">
    <property type="term" value="P:protein secretion"/>
    <property type="evidence" value="ECO:0007669"/>
    <property type="project" value="InterPro"/>
</dbReference>
<dbReference type="GO" id="GO:0099045">
    <property type="term" value="P:viral extrusion"/>
    <property type="evidence" value="ECO:0007669"/>
    <property type="project" value="UniProtKB-KW"/>
</dbReference>
<dbReference type="Gene3D" id="3.30.1370.120">
    <property type="match status" value="1"/>
</dbReference>
<dbReference type="Gene3D" id="3.55.50.30">
    <property type="match status" value="1"/>
</dbReference>
<dbReference type="InterPro" id="IPR050810">
    <property type="entry name" value="Bact_Secretion_Sys_Channel"/>
</dbReference>
<dbReference type="InterPro" id="IPR049371">
    <property type="entry name" value="GspD-like_N0"/>
</dbReference>
<dbReference type="InterPro" id="IPR001775">
    <property type="entry name" value="GspD/PilQ"/>
</dbReference>
<dbReference type="InterPro" id="IPR005644">
    <property type="entry name" value="NolW-like"/>
</dbReference>
<dbReference type="InterPro" id="IPR038591">
    <property type="entry name" value="NolW-like_sf"/>
</dbReference>
<dbReference type="InterPro" id="IPR004846">
    <property type="entry name" value="T2SS/T3SS_dom"/>
</dbReference>
<dbReference type="InterPro" id="IPR004845">
    <property type="entry name" value="T2SS_GspD_CS"/>
</dbReference>
<dbReference type="PANTHER" id="PTHR30332">
    <property type="entry name" value="PROBABLE GENERAL SECRETION PATHWAY PROTEIN D"/>
    <property type="match status" value="1"/>
</dbReference>
<dbReference type="PANTHER" id="PTHR30332:SF24">
    <property type="entry name" value="SECRETIN GSPD-RELATED"/>
    <property type="match status" value="1"/>
</dbReference>
<dbReference type="Pfam" id="PF00263">
    <property type="entry name" value="Secretin"/>
    <property type="match status" value="1"/>
</dbReference>
<dbReference type="Pfam" id="PF03958">
    <property type="entry name" value="Secretin_N"/>
    <property type="match status" value="1"/>
</dbReference>
<dbReference type="Pfam" id="PF21305">
    <property type="entry name" value="type_II_gspD_N0"/>
    <property type="match status" value="1"/>
</dbReference>
<dbReference type="PRINTS" id="PR00811">
    <property type="entry name" value="BCTERIALGSPD"/>
</dbReference>
<dbReference type="PRINTS" id="PR01032">
    <property type="entry name" value="PHAGEIV"/>
</dbReference>
<dbReference type="PROSITE" id="PS00875">
    <property type="entry name" value="T2SP_D"/>
    <property type="match status" value="1"/>
</dbReference>
<gene>
    <name type="primary">IV</name>
</gene>
<organism>
    <name type="scientific">Salmonella phage IKe</name>
    <name type="common">Bacteriophage IKe</name>
    <dbReference type="NCBI Taxonomy" id="10867"/>
    <lineage>
        <taxon>Viruses</taxon>
        <taxon>Monodnaviria</taxon>
        <taxon>Loebvirae</taxon>
        <taxon>Hofneiviricota</taxon>
        <taxon>Faserviricetes</taxon>
        <taxon>Tubulavirales</taxon>
        <taxon>Inoviridae</taxon>
        <taxon>Lineavirus</taxon>
        <taxon>Lineavirus IKe</taxon>
    </lineage>
</organism>
<feature type="signal peptide" evidence="2">
    <location>
        <begin position="1"/>
        <end position="30"/>
    </location>
</feature>
<feature type="chain" id="PRO_0000209452" description="Virion export protein">
    <location>
        <begin position="31"/>
        <end position="437"/>
    </location>
</feature>
<feature type="transmembrane region" description="Helical" evidence="2">
    <location>
        <begin position="328"/>
        <end position="348"/>
    </location>
</feature>
<feature type="region of interest" description="Disordered" evidence="3">
    <location>
        <begin position="99"/>
        <end position="120"/>
    </location>
</feature>
<feature type="compositionally biased region" description="Polar residues" evidence="3">
    <location>
        <begin position="99"/>
        <end position="111"/>
    </location>
</feature>
<keyword id="KW-1043">Host membrane</keyword>
<keyword id="KW-0472">Membrane</keyword>
<keyword id="KW-1185">Reference proteome</keyword>
<keyword id="KW-0732">Signal</keyword>
<keyword id="KW-0812">Transmembrane</keyword>
<keyword id="KW-1133">Transmembrane helix</keyword>
<keyword id="KW-1249">Viral extrusion</keyword>
<keyword id="KW-1188">Viral release from host cell</keyword>